<protein>
    <recommendedName>
        <fullName evidence="2">Probable diguanylate cyclase DgcQ</fullName>
        <shortName evidence="2">DGC</shortName>
        <ecNumber evidence="2">2.7.7.65</ecNumber>
    </recommendedName>
    <alternativeName>
        <fullName evidence="2">Cellulose synthesis regulatory protein</fullName>
    </alternativeName>
</protein>
<feature type="chain" id="PRO_0000248034" description="Probable diguanylate cyclase DgcQ">
    <location>
        <begin position="1"/>
        <end position="570"/>
    </location>
</feature>
<feature type="transmembrane region" description="Helical" evidence="3">
    <location>
        <begin position="20"/>
        <end position="40"/>
    </location>
</feature>
<feature type="transmembrane region" description="Helical" evidence="3">
    <location>
        <begin position="360"/>
        <end position="380"/>
    </location>
</feature>
<feature type="domain" description="GGDEF" evidence="4">
    <location>
        <begin position="428"/>
        <end position="563"/>
    </location>
</feature>
<feature type="active site" description="Proton acceptor" evidence="3">
    <location>
        <position position="479"/>
    </location>
</feature>
<feature type="binding site" evidence="1">
    <location>
        <position position="436"/>
    </location>
    <ligand>
        <name>Mg(2+)</name>
        <dbReference type="ChEBI" id="CHEBI:18420"/>
    </ligand>
</feature>
<feature type="binding site" evidence="1">
    <location>
        <position position="444"/>
    </location>
    <ligand>
        <name>substrate</name>
    </ligand>
</feature>
<feature type="binding site" evidence="1">
    <location>
        <position position="449"/>
    </location>
    <ligand>
        <name>substrate</name>
    </ligand>
</feature>
<feature type="binding site" evidence="1">
    <location>
        <position position="453"/>
    </location>
    <ligand>
        <name>substrate</name>
    </ligand>
</feature>
<feature type="binding site" evidence="1">
    <location>
        <position position="479"/>
    </location>
    <ligand>
        <name>Mg(2+)</name>
        <dbReference type="ChEBI" id="CHEBI:18420"/>
    </ligand>
</feature>
<feature type="site" description="Transition state stabilizer" evidence="3">
    <location>
        <position position="441"/>
    </location>
</feature>
<comment type="function">
    <text evidence="1 2">Catalyzes the synthesis of cyclic-di-GMP (c-di-GMP) via the condensation of 2 GTP molecules (By similarity). Cyclic-di-GMP is a second messenger which controls cell surface-associated traits in bacteria. Involved in the regulation of cellulose production (By similarity).</text>
</comment>
<comment type="catalytic activity">
    <reaction evidence="1">
        <text>2 GTP = 3',3'-c-di-GMP + 2 diphosphate</text>
        <dbReference type="Rhea" id="RHEA:24898"/>
        <dbReference type="ChEBI" id="CHEBI:33019"/>
        <dbReference type="ChEBI" id="CHEBI:37565"/>
        <dbReference type="ChEBI" id="CHEBI:58805"/>
        <dbReference type="EC" id="2.7.7.65"/>
    </reaction>
</comment>
<comment type="cofactor">
    <cofactor evidence="1">
        <name>Mg(2+)</name>
        <dbReference type="ChEBI" id="CHEBI:18420"/>
    </cofactor>
    <text evidence="1">Binds 1 Mg(2+) ion per monomer.</text>
</comment>
<comment type="pathway">
    <text evidence="2">Glycan metabolism; bacterial cellulose biosynthesis.</text>
</comment>
<comment type="pathway">
    <text evidence="2">Purine metabolism; 3',5'-cyclic di-GMP biosynthesis.</text>
</comment>
<comment type="subunit">
    <text evidence="1">Homodimer.</text>
</comment>
<comment type="subcellular location">
    <subcellularLocation>
        <location evidence="5">Cell inner membrane</location>
        <topology evidence="3">Multi-pass membrane protein</topology>
    </subcellularLocation>
</comment>
<dbReference type="EC" id="2.7.7.65" evidence="2"/>
<dbReference type="EMBL" id="AE017220">
    <property type="protein sequence ID" value="AAX65897.1"/>
    <property type="molecule type" value="Genomic_DNA"/>
</dbReference>
<dbReference type="RefSeq" id="WP_001119823.1">
    <property type="nucleotide sequence ID" value="NC_006905.1"/>
</dbReference>
<dbReference type="SMR" id="Q57N14"/>
<dbReference type="KEGG" id="sec:SCH_1991"/>
<dbReference type="HOGENOM" id="CLU_000445_11_23_6"/>
<dbReference type="UniPathway" id="UPA00599"/>
<dbReference type="UniPathway" id="UPA00694"/>
<dbReference type="Proteomes" id="UP000000538">
    <property type="component" value="Chromosome"/>
</dbReference>
<dbReference type="GO" id="GO:0005886">
    <property type="term" value="C:plasma membrane"/>
    <property type="evidence" value="ECO:0007669"/>
    <property type="project" value="UniProtKB-SubCell"/>
</dbReference>
<dbReference type="GO" id="GO:0052621">
    <property type="term" value="F:diguanylate cyclase activity"/>
    <property type="evidence" value="ECO:0007669"/>
    <property type="project" value="UniProtKB-EC"/>
</dbReference>
<dbReference type="GO" id="GO:0005525">
    <property type="term" value="F:GTP binding"/>
    <property type="evidence" value="ECO:0007669"/>
    <property type="project" value="UniProtKB-KW"/>
</dbReference>
<dbReference type="GO" id="GO:0046872">
    <property type="term" value="F:metal ion binding"/>
    <property type="evidence" value="ECO:0007669"/>
    <property type="project" value="UniProtKB-KW"/>
</dbReference>
<dbReference type="GO" id="GO:0043709">
    <property type="term" value="P:cell adhesion involved in single-species biofilm formation"/>
    <property type="evidence" value="ECO:0007669"/>
    <property type="project" value="TreeGrafter"/>
</dbReference>
<dbReference type="GO" id="GO:0030244">
    <property type="term" value="P:cellulose biosynthetic process"/>
    <property type="evidence" value="ECO:0007669"/>
    <property type="project" value="UniProtKB-KW"/>
</dbReference>
<dbReference type="GO" id="GO:1902201">
    <property type="term" value="P:negative regulation of bacterial-type flagellum-dependent cell motility"/>
    <property type="evidence" value="ECO:0007669"/>
    <property type="project" value="TreeGrafter"/>
</dbReference>
<dbReference type="CDD" id="cd01949">
    <property type="entry name" value="GGDEF"/>
    <property type="match status" value="1"/>
</dbReference>
<dbReference type="FunFam" id="3.30.70.270:FF:000001">
    <property type="entry name" value="Diguanylate cyclase domain protein"/>
    <property type="match status" value="1"/>
</dbReference>
<dbReference type="Gene3D" id="3.30.70.270">
    <property type="match status" value="1"/>
</dbReference>
<dbReference type="InterPro" id="IPR033416">
    <property type="entry name" value="CHASE7"/>
</dbReference>
<dbReference type="InterPro" id="IPR050469">
    <property type="entry name" value="Diguanylate_Cyclase"/>
</dbReference>
<dbReference type="InterPro" id="IPR000160">
    <property type="entry name" value="GGDEF_dom"/>
</dbReference>
<dbReference type="InterPro" id="IPR029787">
    <property type="entry name" value="Nucleotide_cyclase"/>
</dbReference>
<dbReference type="InterPro" id="IPR043128">
    <property type="entry name" value="Rev_trsase/Diguanyl_cyclase"/>
</dbReference>
<dbReference type="NCBIfam" id="TIGR00254">
    <property type="entry name" value="GGDEF"/>
    <property type="match status" value="1"/>
</dbReference>
<dbReference type="NCBIfam" id="NF011955">
    <property type="entry name" value="PRK15426.1"/>
    <property type="match status" value="1"/>
</dbReference>
<dbReference type="PANTHER" id="PTHR45138:SF16">
    <property type="entry name" value="DIGUANYLATE CYCLASE DGCQ-RELATED"/>
    <property type="match status" value="1"/>
</dbReference>
<dbReference type="PANTHER" id="PTHR45138">
    <property type="entry name" value="REGULATORY COMPONENTS OF SENSORY TRANSDUCTION SYSTEM"/>
    <property type="match status" value="1"/>
</dbReference>
<dbReference type="Pfam" id="PF17151">
    <property type="entry name" value="CHASE7"/>
    <property type="match status" value="1"/>
</dbReference>
<dbReference type="Pfam" id="PF00990">
    <property type="entry name" value="GGDEF"/>
    <property type="match status" value="1"/>
</dbReference>
<dbReference type="SMART" id="SM00267">
    <property type="entry name" value="GGDEF"/>
    <property type="match status" value="1"/>
</dbReference>
<dbReference type="SUPFAM" id="SSF55073">
    <property type="entry name" value="Nucleotide cyclase"/>
    <property type="match status" value="1"/>
</dbReference>
<dbReference type="PROSITE" id="PS50887">
    <property type="entry name" value="GGDEF"/>
    <property type="match status" value="1"/>
</dbReference>
<evidence type="ECO:0000250" key="1">
    <source>
        <dbReference type="UniProtKB" id="P31129"/>
    </source>
</evidence>
<evidence type="ECO:0000250" key="2">
    <source>
        <dbReference type="UniProtKB" id="P76330"/>
    </source>
</evidence>
<evidence type="ECO:0000255" key="3"/>
<evidence type="ECO:0000255" key="4">
    <source>
        <dbReference type="PROSITE-ProRule" id="PRU00095"/>
    </source>
</evidence>
<evidence type="ECO:0000305" key="5"/>
<gene>
    <name evidence="2" type="primary">dgcQ</name>
    <name type="synonym">yedQ</name>
    <name type="ordered locus">SCH_1991</name>
</gene>
<proteinExistence type="inferred from homology"/>
<keyword id="KW-0997">Cell inner membrane</keyword>
<keyword id="KW-1003">Cell membrane</keyword>
<keyword id="KW-0135">Cellulose biosynthesis</keyword>
<keyword id="KW-0342">GTP-binding</keyword>
<keyword id="KW-0460">Magnesium</keyword>
<keyword id="KW-0472">Membrane</keyword>
<keyword id="KW-0479">Metal-binding</keyword>
<keyword id="KW-0547">Nucleotide-binding</keyword>
<keyword id="KW-0808">Transferase</keyword>
<keyword id="KW-0812">Transmembrane</keyword>
<keyword id="KW-1133">Transmembrane helix</keyword>
<reference key="1">
    <citation type="journal article" date="2005" name="Nucleic Acids Res.">
        <title>The genome sequence of Salmonella enterica serovar Choleraesuis, a highly invasive and resistant zoonotic pathogen.</title>
        <authorList>
            <person name="Chiu C.-H."/>
            <person name="Tang P."/>
            <person name="Chu C."/>
            <person name="Hu S."/>
            <person name="Bao Q."/>
            <person name="Yu J."/>
            <person name="Chou Y.-Y."/>
            <person name="Wang H.-S."/>
            <person name="Lee Y.-S."/>
        </authorList>
    </citation>
    <scope>NUCLEOTIDE SEQUENCE [LARGE SCALE GENOMIC DNA]</scope>
    <source>
        <strain>SC-B67</strain>
    </source>
</reference>
<name>DGCQ_SALCH</name>
<organism>
    <name type="scientific">Salmonella choleraesuis (strain SC-B67)</name>
    <dbReference type="NCBI Taxonomy" id="321314"/>
    <lineage>
        <taxon>Bacteria</taxon>
        <taxon>Pseudomonadati</taxon>
        <taxon>Pseudomonadota</taxon>
        <taxon>Gammaproteobacteria</taxon>
        <taxon>Enterobacterales</taxon>
        <taxon>Enterobacteriaceae</taxon>
        <taxon>Salmonella</taxon>
    </lineage>
</organism>
<sequence>MPHETLLDNQGWFKKLARRFGPGHVVNTCFLIVMLFSTLLTWREVMILKDAYVASQRNHLGSVANVLDRQLQFNMDRLIFLRNGMHEALVAPLAFSALQSAVTQFEQRRVRHFWQLELDKRRTLPLYGVSDQFVARTTLLSRESRDLANELTATLELGYLARLARSSAMLTLETMYVSCSGFYLSTLPTAYGSDIVSRYYQYVTQPWFIEQSQRRNPQRGVRWFTSAQPYVADEQKKVTASLPLDHDNYWYGVLAMDIPVASLQRFLRDAAEKDIEGEYQLYDNHLRLLTDSAPEQQTANTLNDRERALLAREIEKDTLGGLRLGTHYVSWERLDHFDGVLLRVHTLREGIQGNFGSISIALTLLWVLFTAMLLISWGVIRHMVKNMFVLQNSLQWQAWHDPLTRLYNRGALFEKASRLAKRYREARQPFSVIQLDLDYFKSVNDRFGHQAGDRVLSHAAGLIGSTIRAHDIAGRVGGEEFCIVLPGATKAQALQIAERIRQRINDKEILVTKSTTLRISASMGISSAEEYGDYDFEQLQSLADKRLYYAKQSGRNRICASDATQEREKK</sequence>
<accession>Q57N14</accession>